<accession>Q38PU6</accession>
<keyword id="KW-1003">Cell membrane</keyword>
<keyword id="KW-1015">Disulfide bond</keyword>
<keyword id="KW-0325">Glycoprotein</keyword>
<keyword id="KW-0407">Ion channel</keyword>
<keyword id="KW-0406">Ion transport</keyword>
<keyword id="KW-1071">Ligand-gated ion channel</keyword>
<keyword id="KW-0449">Lipoprotein</keyword>
<keyword id="KW-0472">Membrane</keyword>
<keyword id="KW-0564">Palmitate</keyword>
<keyword id="KW-0597">Phosphoprotein</keyword>
<keyword id="KW-0628">Postsynaptic cell membrane</keyword>
<keyword id="KW-0675">Receptor</keyword>
<keyword id="KW-1185">Reference proteome</keyword>
<keyword id="KW-0732">Signal</keyword>
<keyword id="KW-0770">Synapse</keyword>
<keyword id="KW-0812">Transmembrane</keyword>
<keyword id="KW-1133">Transmembrane helix</keyword>
<keyword id="KW-0813">Transport</keyword>
<protein>
    <recommendedName>
        <fullName evidence="5">Glutamate receptor 3</fullName>
        <shortName>GluR-3</shortName>
    </recommendedName>
    <alternativeName>
        <fullName>AMPA-selective glutamate receptor 3</fullName>
    </alternativeName>
    <alternativeName>
        <fullName>GluR-C</fullName>
    </alternativeName>
    <alternativeName>
        <fullName>GluR-K3</fullName>
    </alternativeName>
    <alternativeName>
        <fullName>Glutamate receptor ionotropic, AMPA 3</fullName>
    </alternativeName>
</protein>
<proteinExistence type="evidence at transcript level"/>
<reference key="1">
    <citation type="journal article" date="2006" name="Mol. Vis.">
        <title>Expression and sequences of genes encoding glutamate receptors and transporters in primate retina determined using 3'-end amplification polymerase chain reaction.</title>
        <authorList>
            <person name="Hanna M.C."/>
            <person name="Calkins D.J."/>
        </authorList>
    </citation>
    <scope>NUCLEOTIDE SEQUENCE [MRNA]</scope>
    <source>
        <tissue>Retina</tissue>
    </source>
</reference>
<gene>
    <name evidence="5" type="primary">GRIA3</name>
    <name type="synonym">GluA3</name>
    <name type="synonym">GLUR3</name>
</gene>
<organism>
    <name type="scientific">Macaca fascicularis</name>
    <name type="common">Crab-eating macaque</name>
    <name type="synonym">Cynomolgus monkey</name>
    <dbReference type="NCBI Taxonomy" id="9541"/>
    <lineage>
        <taxon>Eukaryota</taxon>
        <taxon>Metazoa</taxon>
        <taxon>Chordata</taxon>
        <taxon>Craniata</taxon>
        <taxon>Vertebrata</taxon>
        <taxon>Euteleostomi</taxon>
        <taxon>Mammalia</taxon>
        <taxon>Eutheria</taxon>
        <taxon>Euarchontoglires</taxon>
        <taxon>Primates</taxon>
        <taxon>Haplorrhini</taxon>
        <taxon>Catarrhini</taxon>
        <taxon>Cercopithecidae</taxon>
        <taxon>Cercopithecinae</taxon>
        <taxon>Macaca</taxon>
    </lineage>
</organism>
<feature type="signal peptide" evidence="7">
    <location>
        <begin position="1"/>
        <end position="28"/>
    </location>
</feature>
<feature type="chain" id="PRO_0000271754" description="Glutamate receptor 3">
    <location>
        <begin position="29"/>
        <end position="894"/>
    </location>
</feature>
<feature type="topological domain" description="Extracellular" evidence="1">
    <location>
        <begin position="29"/>
        <end position="552"/>
    </location>
</feature>
<feature type="transmembrane region" description="Helical" evidence="1">
    <location>
        <begin position="553"/>
        <end position="573"/>
    </location>
</feature>
<feature type="topological domain" description="Cytoplasmic" evidence="1">
    <location>
        <begin position="574"/>
        <end position="602"/>
    </location>
</feature>
<feature type="intramembrane region" description="Helical; Pore-forming" evidence="1">
    <location>
        <begin position="603"/>
        <end position="618"/>
    </location>
</feature>
<feature type="intramembrane region" evidence="1">
    <location>
        <begin position="619"/>
        <end position="621"/>
    </location>
</feature>
<feature type="topological domain" description="Cytoplasmic" evidence="1">
    <location>
        <begin position="622"/>
        <end position="627"/>
    </location>
</feature>
<feature type="transmembrane region" description="Helical" evidence="1">
    <location>
        <begin position="628"/>
        <end position="648"/>
    </location>
</feature>
<feature type="topological domain" description="Extracellular" evidence="1">
    <location>
        <begin position="649"/>
        <end position="823"/>
    </location>
</feature>
<feature type="transmembrane region" description="Helical; Name=M4" evidence="1">
    <location>
        <begin position="824"/>
        <end position="844"/>
    </location>
</feature>
<feature type="topological domain" description="Cytoplasmic" evidence="1">
    <location>
        <begin position="845"/>
        <end position="894"/>
    </location>
</feature>
<feature type="binding site" evidence="2">
    <location>
        <position position="508"/>
    </location>
    <ligand>
        <name>L-glutamate</name>
        <dbReference type="ChEBI" id="CHEBI:29985"/>
    </ligand>
</feature>
<feature type="binding site" evidence="2">
    <location>
        <position position="510"/>
    </location>
    <ligand>
        <name>L-glutamate</name>
        <dbReference type="ChEBI" id="CHEBI:29985"/>
    </ligand>
</feature>
<feature type="binding site" evidence="2">
    <location>
        <position position="515"/>
    </location>
    <ligand>
        <name>L-glutamate</name>
        <dbReference type="ChEBI" id="CHEBI:29985"/>
    </ligand>
</feature>
<feature type="binding site" evidence="2">
    <location>
        <position position="686"/>
    </location>
    <ligand>
        <name>L-glutamate</name>
        <dbReference type="ChEBI" id="CHEBI:29985"/>
    </ligand>
</feature>
<feature type="binding site" evidence="2">
    <location>
        <position position="687"/>
    </location>
    <ligand>
        <name>L-glutamate</name>
        <dbReference type="ChEBI" id="CHEBI:29985"/>
    </ligand>
</feature>
<feature type="binding site" evidence="2">
    <location>
        <position position="737"/>
    </location>
    <ligand>
        <name>L-glutamate</name>
        <dbReference type="ChEBI" id="CHEBI:29985"/>
    </ligand>
</feature>
<feature type="modified residue" description="Phosphotyrosine" evidence="6">
    <location>
        <position position="877"/>
    </location>
</feature>
<feature type="modified residue" description="Phosphotyrosine" evidence="6">
    <location>
        <position position="887"/>
    </location>
</feature>
<feature type="lipid moiety-binding region" description="S-palmitoyl cysteine" evidence="3">
    <location>
        <position position="621"/>
    </location>
</feature>
<feature type="lipid moiety-binding region" description="S-palmitoyl cysteine" evidence="6">
    <location>
        <position position="847"/>
    </location>
</feature>
<feature type="glycosylation site" description="N-linked (GlcNAc...) asparagine" evidence="7">
    <location>
        <position position="63"/>
    </location>
</feature>
<feature type="glycosylation site" description="N-linked (GlcNAc...) asparagine" evidence="7">
    <location>
        <position position="266"/>
    </location>
</feature>
<feature type="glycosylation site" description="N-linked (GlcNAc...) asparagine" evidence="7">
    <location>
        <position position="380"/>
    </location>
</feature>
<feature type="glycosylation site" description="N-linked (GlcNAc...) asparagine" evidence="7">
    <location>
        <position position="415"/>
    </location>
</feature>
<feature type="glycosylation site" description="N-linked (GlcNAc...) asparagine" evidence="7">
    <location>
        <position position="422"/>
    </location>
</feature>
<feature type="disulfide bond" evidence="4">
    <location>
        <begin position="91"/>
        <end position="340"/>
    </location>
</feature>
<feature type="disulfide bond" evidence="6">
    <location>
        <begin position="750"/>
        <end position="805"/>
    </location>
</feature>
<comment type="function">
    <text evidence="2 5 6">Ionotropic glutamate receptor that functions as a ligand-gated cation channel, gated by L-glutamate and glutamatergic agonists such as alpha-amino-3-hydroxy-5-methyl-4-isoxazolepropionic acid (AMPA), quisqualic acid, and kainic acid (By similarity). L-glutamate acts as an excitatory neurotransmitter at many synapses in the central nervous system and plays an important role in fast excitatory synaptic transmission by inducing long-term potentiation (By similarity). Binding of the excitatory neurotransmitter L-glutamate induces a conformation change, leading to the opening of the cation channel, and thereby converts the chemical signal to an electrical impulse upon entry of calcium (By similarity). The receptor then desensitizes rapidly and enters a transient inactive state, characterized by the presence of bound agonist. In the presence of CACNG8, shows resensitization which is characterized by a delayed accumulation of current flux upon continued application of glutamate (By similarity).</text>
</comment>
<comment type="catalytic activity">
    <reaction evidence="2">
        <text>Ca(2+)(in) = Ca(2+)(out)</text>
        <dbReference type="Rhea" id="RHEA:29671"/>
        <dbReference type="ChEBI" id="CHEBI:29108"/>
    </reaction>
</comment>
<comment type="subunit">
    <text evidence="2 6">Homotetramer or heterotetramer of pore-forming glutamate receptor subunits. Tetramers may be formed by the dimerization of dimers. Interacts with PICK1, GRIP1 and GRIP2. Found in a complex with GRIA1, GRIA2, GRIA4, CNIH2, CNIH3, CACNG2, CACNG3, CACNG4, CACNG5, CACNG7 and CACNG8. Interacts with CACNG5 (By similarity). Found in a complex with GRIA1, GRIA2, GRIA4, DLG4, CACNG8 and CNIH2 (By similarity).</text>
</comment>
<comment type="subcellular location">
    <subcellularLocation>
        <location evidence="2">Cell membrane</location>
        <topology evidence="2">Multi-pass membrane protein</topology>
    </subcellularLocation>
    <subcellularLocation>
        <location evidence="2">Postsynaptic cell membrane</location>
        <topology evidence="2">Multi-pass membrane protein</topology>
    </subcellularLocation>
    <subcellularLocation>
        <location evidence="2">Postsynaptic density membrane</location>
    </subcellularLocation>
</comment>
<comment type="miscellaneous">
    <text evidence="2">The postsynaptic actions of Glu are mediated by a variety of receptors that are named according to their selective agonists. This receptor binds AMPA (quisqualate) &gt; glutamate &gt; kainate.</text>
</comment>
<comment type="similarity">
    <text evidence="8">Belongs to the glutamate-gated ion channel (TC 1.A.10.1) family. GRIA3 subfamily.</text>
</comment>
<comment type="caution">
    <text evidence="8">It is uncertain whether Met-1 or Met-7 is the initiator.</text>
</comment>
<sequence>MARQKKMGQNVLRAVFFLVLGLLGHSHGGFPNTISIGGLFMRNTVQEHSAFRFAVQLYNTNQNTTEKPFHLNYHVDHLDSSNSFSVTNAFCSQFSRGVYAIFGFYDQMSMNTLTSFCGALHTSFVTPSFPTDADVQFVIQMRPALKGAILSLLGHYKWEKFVYLYDTERGFSILQAIMEAAVQNNWQVTARSVGNIKDVQEFRRIIEEMDRRQEKRYLIDCEVERINTILEQVVILGKHSRGYHYMLANLGFTDILLERVMHGGANITGFQIVNNENPMVQQFIQRWVRLDEREFPEAKNAPLKYTSALTHDAILVIAEAFRYLRRQRVDVSRRGSAGDCLANPAVPWSQGIDIERALKMVQVQGMTGNIQFDTYGRRTNYTIDVYEMKVSGSRKAGYWNEYERFVPFSDQQISNDSASSENRTIVVTTILESPYVMYKKNHEQLEGNERYEGYCVDLAYEIAKHVRIKYKLSIVGDGKYGARDPETKIWNGMVGELVYGRADIAVAPLTITLVREEVIDFSKPFMSLGISIMIKKPQKSKPGVFSFLDPLAYEIWMCIVFASIGVSVVLFLVSRFSPYEWHLEDNNEEPRDPQSPPDPPNEFGIFNSLWFSLGAFMQQGCDISPRSLSGRIVGGVWWFFTLIIISSYTANLAAFLTVERMVSPIESAEDLAKQTEIAYGTLDSGSTKEFFRRSKIAVYEKMWSYMKSAEPSVFTKTTADGVARVRKSKGKFAFLLESTMNEYIEQRKPCDTMKVGGNLDSKGYGVATPKGSALGNAVNLAVLKLNEQGLLDKLKNKWWYDKGECGTGGCGSKDKTSALSLSNVAGVFYILVGGLGLAMMVALIEFCYKSRAESKRMKLTKNTQNFKPAPATNTQNYATYREGYNVYGTESVKI</sequence>
<evidence type="ECO:0000250" key="1"/>
<evidence type="ECO:0000250" key="2">
    <source>
        <dbReference type="UniProtKB" id="P19492"/>
    </source>
</evidence>
<evidence type="ECO:0000250" key="3">
    <source>
        <dbReference type="UniProtKB" id="P23819"/>
    </source>
</evidence>
<evidence type="ECO:0000250" key="4">
    <source>
        <dbReference type="UniProtKB" id="P42262"/>
    </source>
</evidence>
<evidence type="ECO:0000250" key="5">
    <source>
        <dbReference type="UniProtKB" id="P42263"/>
    </source>
</evidence>
<evidence type="ECO:0000250" key="6">
    <source>
        <dbReference type="UniProtKB" id="Q9Z2W9"/>
    </source>
</evidence>
<evidence type="ECO:0000255" key="7"/>
<evidence type="ECO:0000305" key="8"/>
<name>GRIA3_MACFA</name>
<dbReference type="EMBL" id="DQ159931">
    <property type="protein sequence ID" value="ABA47255.1"/>
    <property type="molecule type" value="mRNA"/>
</dbReference>
<dbReference type="SMR" id="Q38PU6"/>
<dbReference type="STRING" id="9541.ENSMFAP00000010984"/>
<dbReference type="GlyCosmos" id="Q38PU6">
    <property type="glycosylation" value="5 sites, No reported glycans"/>
</dbReference>
<dbReference type="eggNOG" id="KOG1054">
    <property type="taxonomic scope" value="Eukaryota"/>
</dbReference>
<dbReference type="Proteomes" id="UP000233100">
    <property type="component" value="Unplaced"/>
</dbReference>
<dbReference type="GO" id="GO:0032281">
    <property type="term" value="C:AMPA glutamate receptor complex"/>
    <property type="evidence" value="ECO:0000250"/>
    <property type="project" value="UniProtKB"/>
</dbReference>
<dbReference type="GO" id="GO:0005886">
    <property type="term" value="C:plasma membrane"/>
    <property type="evidence" value="ECO:0000250"/>
    <property type="project" value="UniProtKB"/>
</dbReference>
<dbReference type="GO" id="GO:0098839">
    <property type="term" value="C:postsynaptic density membrane"/>
    <property type="evidence" value="ECO:0007669"/>
    <property type="project" value="UniProtKB-SubCell"/>
</dbReference>
<dbReference type="GO" id="GO:0045211">
    <property type="term" value="C:postsynaptic membrane"/>
    <property type="evidence" value="ECO:0000250"/>
    <property type="project" value="UniProtKB"/>
</dbReference>
<dbReference type="GO" id="GO:0004971">
    <property type="term" value="F:AMPA glutamate receptor activity"/>
    <property type="evidence" value="ECO:0000250"/>
    <property type="project" value="UniProtKB"/>
</dbReference>
<dbReference type="GO" id="GO:0022849">
    <property type="term" value="F:glutamate-gated calcium ion channel activity"/>
    <property type="evidence" value="ECO:0000250"/>
    <property type="project" value="UniProtKB"/>
</dbReference>
<dbReference type="GO" id="GO:0004970">
    <property type="term" value="F:glutamate-gated receptor activity"/>
    <property type="evidence" value="ECO:0000250"/>
    <property type="project" value="UniProtKB"/>
</dbReference>
<dbReference type="GO" id="GO:0060291">
    <property type="term" value="P:long-term synaptic potentiation"/>
    <property type="evidence" value="ECO:0000250"/>
    <property type="project" value="UniProtKB"/>
</dbReference>
<dbReference type="GO" id="GO:0051290">
    <property type="term" value="P:protein heterotetramerization"/>
    <property type="evidence" value="ECO:0000250"/>
    <property type="project" value="UniProtKB"/>
</dbReference>
<dbReference type="GO" id="GO:0051289">
    <property type="term" value="P:protein homotetramerization"/>
    <property type="evidence" value="ECO:0000250"/>
    <property type="project" value="UniProtKB"/>
</dbReference>
<dbReference type="CDD" id="cd06387">
    <property type="entry name" value="PBP1_iGluR_AMPA_GluR3"/>
    <property type="match status" value="1"/>
</dbReference>
<dbReference type="CDD" id="cd13715">
    <property type="entry name" value="PBP2_iGluR_AMPA"/>
    <property type="match status" value="1"/>
</dbReference>
<dbReference type="FunFam" id="1.10.287.70:FF:000067">
    <property type="entry name" value="glutamate receptor 2 isoform X1"/>
    <property type="match status" value="1"/>
</dbReference>
<dbReference type="FunFam" id="1.10.287.70:FF:000099">
    <property type="entry name" value="glutamate receptor 2 isoform X1"/>
    <property type="match status" value="1"/>
</dbReference>
<dbReference type="FunFam" id="3.40.190.10:FF:000001">
    <property type="entry name" value="Glutamate receptor ionotropic, kainate 2"/>
    <property type="match status" value="1"/>
</dbReference>
<dbReference type="FunFam" id="3.40.50.2300:FF:000004">
    <property type="entry name" value="Glutamate receptor, ionotropic, AMPA 2"/>
    <property type="match status" value="1"/>
</dbReference>
<dbReference type="FunFam" id="3.40.190.10:FF:000666">
    <property type="entry name" value="Glutamate receptor, ionotropic, AMPA 2a"/>
    <property type="match status" value="1"/>
</dbReference>
<dbReference type="Gene3D" id="1.10.287.70">
    <property type="match status" value="2"/>
</dbReference>
<dbReference type="Gene3D" id="3.40.50.2300">
    <property type="match status" value="2"/>
</dbReference>
<dbReference type="Gene3D" id="3.40.190.10">
    <property type="entry name" value="Periplasmic binding protein-like II"/>
    <property type="match status" value="2"/>
</dbReference>
<dbReference type="InterPro" id="IPR001828">
    <property type="entry name" value="ANF_lig-bd_rcpt"/>
</dbReference>
<dbReference type="InterPro" id="IPR019594">
    <property type="entry name" value="Glu/Gly-bd"/>
</dbReference>
<dbReference type="InterPro" id="IPR001508">
    <property type="entry name" value="Iono_Glu_rcpt_met"/>
</dbReference>
<dbReference type="InterPro" id="IPR015683">
    <property type="entry name" value="Ionotropic_Glu_rcpt"/>
</dbReference>
<dbReference type="InterPro" id="IPR001320">
    <property type="entry name" value="Iontro_rcpt_C"/>
</dbReference>
<dbReference type="InterPro" id="IPR028082">
    <property type="entry name" value="Peripla_BP_I"/>
</dbReference>
<dbReference type="PANTHER" id="PTHR18966">
    <property type="entry name" value="IONOTROPIC GLUTAMATE RECEPTOR"/>
    <property type="match status" value="1"/>
</dbReference>
<dbReference type="Pfam" id="PF01094">
    <property type="entry name" value="ANF_receptor"/>
    <property type="match status" value="1"/>
</dbReference>
<dbReference type="Pfam" id="PF00060">
    <property type="entry name" value="Lig_chan"/>
    <property type="match status" value="1"/>
</dbReference>
<dbReference type="Pfam" id="PF10613">
    <property type="entry name" value="Lig_chan-Glu_bd"/>
    <property type="match status" value="1"/>
</dbReference>
<dbReference type="PRINTS" id="PR00177">
    <property type="entry name" value="NMDARECEPTOR"/>
</dbReference>
<dbReference type="SMART" id="SM00918">
    <property type="entry name" value="Lig_chan-Glu_bd"/>
    <property type="match status" value="1"/>
</dbReference>
<dbReference type="SMART" id="SM00079">
    <property type="entry name" value="PBPe"/>
    <property type="match status" value="1"/>
</dbReference>
<dbReference type="SUPFAM" id="SSF53822">
    <property type="entry name" value="Periplasmic binding protein-like I"/>
    <property type="match status" value="1"/>
</dbReference>
<dbReference type="SUPFAM" id="SSF53850">
    <property type="entry name" value="Periplasmic binding protein-like II"/>
    <property type="match status" value="1"/>
</dbReference>
<dbReference type="SUPFAM" id="SSF81324">
    <property type="entry name" value="Voltage-gated potassium channels"/>
    <property type="match status" value="1"/>
</dbReference>